<reference key="1">
    <citation type="journal article" date="2010" name="PLoS ONE">
        <title>The complete multipartite genome sequence of Cupriavidus necator JMP134, a versatile pollutant degrader.</title>
        <authorList>
            <person name="Lykidis A."/>
            <person name="Perez-Pantoja D."/>
            <person name="Ledger T."/>
            <person name="Mavromatis K."/>
            <person name="Anderson I.J."/>
            <person name="Ivanova N.N."/>
            <person name="Hooper S.D."/>
            <person name="Lapidus A."/>
            <person name="Lucas S."/>
            <person name="Gonzalez B."/>
            <person name="Kyrpides N.C."/>
        </authorList>
    </citation>
    <scope>NUCLEOTIDE SEQUENCE [LARGE SCALE GENOMIC DNA]</scope>
    <source>
        <strain>JMP134 / LMG 1197</strain>
    </source>
</reference>
<keyword id="KW-0997">Cell inner membrane</keyword>
<keyword id="KW-1003">Cell membrane</keyword>
<keyword id="KW-0143">Chaperone</keyword>
<keyword id="KW-0472">Membrane</keyword>
<keyword id="KW-0653">Protein transport</keyword>
<keyword id="KW-0812">Transmembrane</keyword>
<keyword id="KW-1133">Transmembrane helix</keyword>
<keyword id="KW-0813">Transport</keyword>
<feature type="chain" id="PRO_1000070149" description="Membrane protein insertase YidC">
    <location>
        <begin position="1"/>
        <end position="555"/>
    </location>
</feature>
<feature type="transmembrane region" description="Helical" evidence="1">
    <location>
        <begin position="7"/>
        <end position="24"/>
    </location>
</feature>
<feature type="transmembrane region" description="Helical" evidence="1">
    <location>
        <begin position="341"/>
        <end position="361"/>
    </location>
</feature>
<feature type="transmembrane region" description="Helical" evidence="1">
    <location>
        <begin position="364"/>
        <end position="384"/>
    </location>
</feature>
<feature type="transmembrane region" description="Helical" evidence="1">
    <location>
        <begin position="430"/>
        <end position="450"/>
    </location>
</feature>
<feature type="transmembrane region" description="Helical" evidence="1">
    <location>
        <begin position="468"/>
        <end position="488"/>
    </location>
</feature>
<feature type="transmembrane region" description="Helical" evidence="1">
    <location>
        <begin position="503"/>
        <end position="523"/>
    </location>
</feature>
<feature type="region of interest" description="Disordered" evidence="2">
    <location>
        <begin position="61"/>
        <end position="81"/>
    </location>
</feature>
<sequence length="555" mass="61039">MDIKRTILWVIFSMSLVLLYDNWQRANGHASMFFPSATQQQAASAPAASAAQGDVPKANATAGAAAPAAPGGAPQAAAQPTGEKIIVTTDEVRAEIDTAGGILSRLELLNEHEKDGKPVVLFERDTTRTYMARSGLIGGDLPNHTTVFTATPGPRTLDGADKLEVTLTADKNGVKFVKTYVFHKGSYVVDARFAVTNDGTAPVSPTLYMELARDGSKVEQSQFYSTFTGPAIYTDADKYHKITFDDIAKGKASTPAATTSGWVAMVQHYFASAWIPQAGKEHSFYVQQIDPNLYRVGIQQPLGQIAPGATVTTDARLFAGPQEERMLEKITPGLELVKDYGWLTILAKPLFWLLEKLHGFLNNWGWSIIALTVLIKLVFFPLSAASYKSMGKMKDLQPRMTSIRERHKGDPQKMNAEMMALYKTEKVNPLGGCLPIVIQIPVFIALYWVLLSSVEMRGAPWLGWIHDLSVPDPFYILPIVMAVSMFVQTRLNPTPPDPVQAKVMMIMPLVFSFMFFFFPAGLVLYWVVNNILSIAQQWQINRMLGKGKTAAVAKS</sequence>
<comment type="function">
    <text evidence="1">Required for the insertion and/or proper folding and/or complex formation of integral membrane proteins into the membrane. Involved in integration of membrane proteins that insert both dependently and independently of the Sec translocase complex, as well as at least some lipoproteins. Aids folding of multispanning membrane proteins.</text>
</comment>
<comment type="subunit">
    <text evidence="1">Interacts with the Sec translocase complex via SecD. Specifically interacts with transmembrane segments of nascent integral membrane proteins during membrane integration.</text>
</comment>
<comment type="subcellular location">
    <subcellularLocation>
        <location evidence="1">Cell inner membrane</location>
        <topology evidence="1">Multi-pass membrane protein</topology>
    </subcellularLocation>
</comment>
<comment type="similarity">
    <text evidence="1">Belongs to the OXA1/ALB3/YidC family. Type 1 subfamily.</text>
</comment>
<protein>
    <recommendedName>
        <fullName evidence="1">Membrane protein insertase YidC</fullName>
    </recommendedName>
    <alternativeName>
        <fullName evidence="1">Foldase YidC</fullName>
    </alternativeName>
    <alternativeName>
        <fullName evidence="1">Membrane integrase YidC</fullName>
    </alternativeName>
    <alternativeName>
        <fullName evidence="1">Membrane protein YidC</fullName>
    </alternativeName>
</protein>
<accession>Q46VL6</accession>
<proteinExistence type="inferred from homology"/>
<organism>
    <name type="scientific">Cupriavidus pinatubonensis (strain JMP 134 / LMG 1197)</name>
    <name type="common">Cupriavidus necator (strain JMP 134)</name>
    <dbReference type="NCBI Taxonomy" id="264198"/>
    <lineage>
        <taxon>Bacteria</taxon>
        <taxon>Pseudomonadati</taxon>
        <taxon>Pseudomonadota</taxon>
        <taxon>Betaproteobacteria</taxon>
        <taxon>Burkholderiales</taxon>
        <taxon>Burkholderiaceae</taxon>
        <taxon>Cupriavidus</taxon>
    </lineage>
</organism>
<dbReference type="EMBL" id="CP000090">
    <property type="protein sequence ID" value="AAZ62818.1"/>
    <property type="molecule type" value="Genomic_DNA"/>
</dbReference>
<dbReference type="SMR" id="Q46VL6"/>
<dbReference type="STRING" id="264198.Reut_A3460"/>
<dbReference type="KEGG" id="reu:Reut_A3460"/>
<dbReference type="eggNOG" id="COG0706">
    <property type="taxonomic scope" value="Bacteria"/>
</dbReference>
<dbReference type="HOGENOM" id="CLU_016535_3_0_4"/>
<dbReference type="OrthoDB" id="9780552at2"/>
<dbReference type="GO" id="GO:0005886">
    <property type="term" value="C:plasma membrane"/>
    <property type="evidence" value="ECO:0007669"/>
    <property type="project" value="UniProtKB-SubCell"/>
</dbReference>
<dbReference type="GO" id="GO:0032977">
    <property type="term" value="F:membrane insertase activity"/>
    <property type="evidence" value="ECO:0007669"/>
    <property type="project" value="InterPro"/>
</dbReference>
<dbReference type="GO" id="GO:0051205">
    <property type="term" value="P:protein insertion into membrane"/>
    <property type="evidence" value="ECO:0007669"/>
    <property type="project" value="TreeGrafter"/>
</dbReference>
<dbReference type="GO" id="GO:0015031">
    <property type="term" value="P:protein transport"/>
    <property type="evidence" value="ECO:0007669"/>
    <property type="project" value="UniProtKB-KW"/>
</dbReference>
<dbReference type="CDD" id="cd20070">
    <property type="entry name" value="5TM_YidC_Alb3"/>
    <property type="match status" value="1"/>
</dbReference>
<dbReference type="CDD" id="cd19961">
    <property type="entry name" value="EcYidC-like_peri"/>
    <property type="match status" value="1"/>
</dbReference>
<dbReference type="Gene3D" id="2.70.98.90">
    <property type="match status" value="1"/>
</dbReference>
<dbReference type="HAMAP" id="MF_01810">
    <property type="entry name" value="YidC_type1"/>
    <property type="match status" value="1"/>
</dbReference>
<dbReference type="InterPro" id="IPR019998">
    <property type="entry name" value="Membr_insert_YidC"/>
</dbReference>
<dbReference type="InterPro" id="IPR028053">
    <property type="entry name" value="Membr_insert_YidC_N"/>
</dbReference>
<dbReference type="InterPro" id="IPR001708">
    <property type="entry name" value="YidC/ALB3/OXA1/COX18"/>
</dbReference>
<dbReference type="InterPro" id="IPR028055">
    <property type="entry name" value="YidC/Oxa/ALB_C"/>
</dbReference>
<dbReference type="InterPro" id="IPR047196">
    <property type="entry name" value="YidC_ALB_C"/>
</dbReference>
<dbReference type="InterPro" id="IPR038221">
    <property type="entry name" value="YidC_periplasmic_sf"/>
</dbReference>
<dbReference type="NCBIfam" id="NF002352">
    <property type="entry name" value="PRK01318.1-3"/>
    <property type="match status" value="1"/>
</dbReference>
<dbReference type="NCBIfam" id="TIGR03593">
    <property type="entry name" value="yidC_nterm"/>
    <property type="match status" value="1"/>
</dbReference>
<dbReference type="NCBIfam" id="TIGR03592">
    <property type="entry name" value="yidC_oxa1_cterm"/>
    <property type="match status" value="1"/>
</dbReference>
<dbReference type="PANTHER" id="PTHR12428:SF65">
    <property type="entry name" value="CYTOCHROME C OXIDASE ASSEMBLY PROTEIN COX18, MITOCHONDRIAL"/>
    <property type="match status" value="1"/>
</dbReference>
<dbReference type="PANTHER" id="PTHR12428">
    <property type="entry name" value="OXA1"/>
    <property type="match status" value="1"/>
</dbReference>
<dbReference type="Pfam" id="PF02096">
    <property type="entry name" value="60KD_IMP"/>
    <property type="match status" value="1"/>
</dbReference>
<dbReference type="Pfam" id="PF14849">
    <property type="entry name" value="YidC_periplas"/>
    <property type="match status" value="1"/>
</dbReference>
<dbReference type="PRINTS" id="PR00701">
    <property type="entry name" value="60KDINNERMP"/>
</dbReference>
<dbReference type="PRINTS" id="PR01900">
    <property type="entry name" value="YIDCPROTEIN"/>
</dbReference>
<name>YIDC_CUPPJ</name>
<evidence type="ECO:0000255" key="1">
    <source>
        <dbReference type="HAMAP-Rule" id="MF_01810"/>
    </source>
</evidence>
<evidence type="ECO:0000256" key="2">
    <source>
        <dbReference type="SAM" id="MobiDB-lite"/>
    </source>
</evidence>
<gene>
    <name evidence="1" type="primary">yidC</name>
    <name type="ordered locus">Reut_A3460</name>
</gene>